<name>GUN18_ARATH</name>
<sequence>MGKLLVVMLIGMFLAFESLEALDYGDALNKSILFFEGQRSGKLPTNQRVKWRADSGLSDGASANVNLIGGYYDAGDNVKFVWPMSFTTTLLSWAALEYQNEITFVNQLGYLRSTIKWGTNFILRAHTSTNMLYTQVGDGNSDHSCWERPEDMDTPRTLYSISSSSPGSEAAGEAAAALAAASLVFKLVDSTYSSKLLNNAKSLFEFADKYRGSYQASCPFYCSHSGYQDELLWAAAWLYKATGEKSYLNYVISNKDWSKAINEFSWDNKFAGVQALLASEFYNGANDLEKFKTDVESFVCALMPGSSSQQIKPTPGGILFIRDSSNLQYVTTATTILFYYSKTLTKAGVGSIQCGSTQFTVSQIRNFAKSQVDYILGNNPLKMSYMVGFGTKYPTQPHHRGSSLPSIQSKPEKIDCNGGFSYYNFDTPNPNVHTGAIVGGPNSSDQYSDKRTDYSHAEPTTYINAAFIGSVAALISSS</sequence>
<organism>
    <name type="scientific">Arabidopsis thaliana</name>
    <name type="common">Mouse-ear cress</name>
    <dbReference type="NCBI Taxonomy" id="3702"/>
    <lineage>
        <taxon>Eukaryota</taxon>
        <taxon>Viridiplantae</taxon>
        <taxon>Streptophyta</taxon>
        <taxon>Embryophyta</taxon>
        <taxon>Tracheophyta</taxon>
        <taxon>Spermatophyta</taxon>
        <taxon>Magnoliopsida</taxon>
        <taxon>eudicotyledons</taxon>
        <taxon>Gunneridae</taxon>
        <taxon>Pentapetalae</taxon>
        <taxon>rosids</taxon>
        <taxon>malvids</taxon>
        <taxon>Brassicales</taxon>
        <taxon>Brassicaceae</taxon>
        <taxon>Camelineae</taxon>
        <taxon>Arabidopsis</taxon>
    </lineage>
</organism>
<dbReference type="EC" id="3.2.1.4"/>
<dbReference type="EMBL" id="AL049482">
    <property type="protein sequence ID" value="CAB39641.1"/>
    <property type="status" value="ALT_SEQ"/>
    <property type="molecule type" value="Genomic_DNA"/>
</dbReference>
<dbReference type="EMBL" id="AL161515">
    <property type="protein sequence ID" value="CAB78097.1"/>
    <property type="status" value="ALT_SEQ"/>
    <property type="molecule type" value="Genomic_DNA"/>
</dbReference>
<dbReference type="EMBL" id="CP002687">
    <property type="protein sequence ID" value="AEE82789.1"/>
    <property type="molecule type" value="Genomic_DNA"/>
</dbReference>
<dbReference type="PIR" id="T04021">
    <property type="entry name" value="T04021"/>
</dbReference>
<dbReference type="RefSeq" id="NP_849349.1">
    <property type="nucleotide sequence ID" value="NM_179018.1"/>
</dbReference>
<dbReference type="SMR" id="Q9SZ90"/>
<dbReference type="STRING" id="3702.Q9SZ90"/>
<dbReference type="CAZy" id="GH9">
    <property type="family name" value="Glycoside Hydrolase Family 9"/>
</dbReference>
<dbReference type="GlyGen" id="Q9SZ90">
    <property type="glycosylation" value="3 sites"/>
</dbReference>
<dbReference type="PaxDb" id="3702-AT4G09740.1"/>
<dbReference type="EnsemblPlants" id="AT4G09740.1">
    <property type="protein sequence ID" value="AT4G09740.1"/>
    <property type="gene ID" value="AT4G09740"/>
</dbReference>
<dbReference type="GeneID" id="826560"/>
<dbReference type="Gramene" id="AT4G09740.1">
    <property type="protein sequence ID" value="AT4G09740.1"/>
    <property type="gene ID" value="AT4G09740"/>
</dbReference>
<dbReference type="KEGG" id="ath:AT4G09740"/>
<dbReference type="Araport" id="AT4G09740"/>
<dbReference type="TAIR" id="AT4G09740">
    <property type="gene designation" value="GH9B14"/>
</dbReference>
<dbReference type="eggNOG" id="ENOG502QRF6">
    <property type="taxonomic scope" value="Eukaryota"/>
</dbReference>
<dbReference type="HOGENOM" id="CLU_008926_1_2_1"/>
<dbReference type="InParanoid" id="Q9SZ90"/>
<dbReference type="OMA" id="KRTDYSH"/>
<dbReference type="BioCyc" id="ARA:AT4G09740-MONOMER"/>
<dbReference type="PRO" id="PR:Q9SZ90"/>
<dbReference type="Proteomes" id="UP000006548">
    <property type="component" value="Chromosome 4"/>
</dbReference>
<dbReference type="ExpressionAtlas" id="Q9SZ90">
    <property type="expression patterns" value="baseline"/>
</dbReference>
<dbReference type="GO" id="GO:0005576">
    <property type="term" value="C:extracellular region"/>
    <property type="evidence" value="ECO:0007669"/>
    <property type="project" value="UniProtKB-SubCell"/>
</dbReference>
<dbReference type="GO" id="GO:0008810">
    <property type="term" value="F:cellulase activity"/>
    <property type="evidence" value="ECO:0007669"/>
    <property type="project" value="UniProtKB-EC"/>
</dbReference>
<dbReference type="GO" id="GO:0071555">
    <property type="term" value="P:cell wall organization"/>
    <property type="evidence" value="ECO:0007669"/>
    <property type="project" value="UniProtKB-KW"/>
</dbReference>
<dbReference type="GO" id="GO:0030245">
    <property type="term" value="P:cellulose catabolic process"/>
    <property type="evidence" value="ECO:0007669"/>
    <property type="project" value="UniProtKB-KW"/>
</dbReference>
<dbReference type="FunFam" id="1.50.10.10:FF:000020">
    <property type="entry name" value="Endoglucanase"/>
    <property type="match status" value="1"/>
</dbReference>
<dbReference type="Gene3D" id="1.50.10.10">
    <property type="match status" value="1"/>
</dbReference>
<dbReference type="InterPro" id="IPR008928">
    <property type="entry name" value="6-hairpin_glycosidase_sf"/>
</dbReference>
<dbReference type="InterPro" id="IPR012341">
    <property type="entry name" value="6hp_glycosidase-like_sf"/>
</dbReference>
<dbReference type="InterPro" id="IPR001701">
    <property type="entry name" value="Glyco_hydro_9"/>
</dbReference>
<dbReference type="InterPro" id="IPR033126">
    <property type="entry name" value="Glyco_hydro_9_Asp/Glu_AS"/>
</dbReference>
<dbReference type="InterPro" id="IPR018221">
    <property type="entry name" value="Glyco_hydro_9_His_AS"/>
</dbReference>
<dbReference type="PANTHER" id="PTHR22298">
    <property type="entry name" value="ENDO-1,4-BETA-GLUCANASE"/>
    <property type="match status" value="1"/>
</dbReference>
<dbReference type="Pfam" id="PF00759">
    <property type="entry name" value="Glyco_hydro_9"/>
    <property type="match status" value="1"/>
</dbReference>
<dbReference type="SUPFAM" id="SSF48208">
    <property type="entry name" value="Six-hairpin glycosidases"/>
    <property type="match status" value="1"/>
</dbReference>
<dbReference type="PROSITE" id="PS60032">
    <property type="entry name" value="GH9_1"/>
    <property type="match status" value="1"/>
</dbReference>
<dbReference type="PROSITE" id="PS00592">
    <property type="entry name" value="GH9_2"/>
    <property type="match status" value="1"/>
</dbReference>
<dbReference type="PROSITE" id="PS00698">
    <property type="entry name" value="GH9_3"/>
    <property type="match status" value="1"/>
</dbReference>
<reference key="1">
    <citation type="journal article" date="1999" name="Nature">
        <title>Sequence and analysis of chromosome 4 of the plant Arabidopsis thaliana.</title>
        <authorList>
            <person name="Mayer K.F.X."/>
            <person name="Schueller C."/>
            <person name="Wambutt R."/>
            <person name="Murphy G."/>
            <person name="Volckaert G."/>
            <person name="Pohl T."/>
            <person name="Duesterhoeft A."/>
            <person name="Stiekema W."/>
            <person name="Entian K.-D."/>
            <person name="Terryn N."/>
            <person name="Harris B."/>
            <person name="Ansorge W."/>
            <person name="Brandt P."/>
            <person name="Grivell L.A."/>
            <person name="Rieger M."/>
            <person name="Weichselgartner M."/>
            <person name="de Simone V."/>
            <person name="Obermaier B."/>
            <person name="Mache R."/>
            <person name="Mueller M."/>
            <person name="Kreis M."/>
            <person name="Delseny M."/>
            <person name="Puigdomenech P."/>
            <person name="Watson M."/>
            <person name="Schmidtheini T."/>
            <person name="Reichert B."/>
            <person name="Portetelle D."/>
            <person name="Perez-Alonso M."/>
            <person name="Boutry M."/>
            <person name="Bancroft I."/>
            <person name="Vos P."/>
            <person name="Hoheisel J."/>
            <person name="Zimmermann W."/>
            <person name="Wedler H."/>
            <person name="Ridley P."/>
            <person name="Langham S.-A."/>
            <person name="McCullagh B."/>
            <person name="Bilham L."/>
            <person name="Robben J."/>
            <person name="van der Schueren J."/>
            <person name="Grymonprez B."/>
            <person name="Chuang Y.-J."/>
            <person name="Vandenbussche F."/>
            <person name="Braeken M."/>
            <person name="Weltjens I."/>
            <person name="Voet M."/>
            <person name="Bastiaens I."/>
            <person name="Aert R."/>
            <person name="Defoor E."/>
            <person name="Weitzenegger T."/>
            <person name="Bothe G."/>
            <person name="Ramsperger U."/>
            <person name="Hilbert H."/>
            <person name="Braun M."/>
            <person name="Holzer E."/>
            <person name="Brandt A."/>
            <person name="Peters S."/>
            <person name="van Staveren M."/>
            <person name="Dirkse W."/>
            <person name="Mooijman P."/>
            <person name="Klein Lankhorst R."/>
            <person name="Rose M."/>
            <person name="Hauf J."/>
            <person name="Koetter P."/>
            <person name="Berneiser S."/>
            <person name="Hempel S."/>
            <person name="Feldpausch M."/>
            <person name="Lamberth S."/>
            <person name="Van den Daele H."/>
            <person name="De Keyser A."/>
            <person name="Buysshaert C."/>
            <person name="Gielen J."/>
            <person name="Villarroel R."/>
            <person name="De Clercq R."/>
            <person name="van Montagu M."/>
            <person name="Rogers J."/>
            <person name="Cronin A."/>
            <person name="Quail M.A."/>
            <person name="Bray-Allen S."/>
            <person name="Clark L."/>
            <person name="Doggett J."/>
            <person name="Hall S."/>
            <person name="Kay M."/>
            <person name="Lennard N."/>
            <person name="McLay K."/>
            <person name="Mayes R."/>
            <person name="Pettett A."/>
            <person name="Rajandream M.A."/>
            <person name="Lyne M."/>
            <person name="Benes V."/>
            <person name="Rechmann S."/>
            <person name="Borkova D."/>
            <person name="Bloecker H."/>
            <person name="Scharfe M."/>
            <person name="Grimm M."/>
            <person name="Loehnert T.-H."/>
            <person name="Dose S."/>
            <person name="de Haan M."/>
            <person name="Maarse A.C."/>
            <person name="Schaefer M."/>
            <person name="Mueller-Auer S."/>
            <person name="Gabel C."/>
            <person name="Fuchs M."/>
            <person name="Fartmann B."/>
            <person name="Granderath K."/>
            <person name="Dauner D."/>
            <person name="Herzl A."/>
            <person name="Neumann S."/>
            <person name="Argiriou A."/>
            <person name="Vitale D."/>
            <person name="Liguori R."/>
            <person name="Piravandi E."/>
            <person name="Massenet O."/>
            <person name="Quigley F."/>
            <person name="Clabauld G."/>
            <person name="Muendlein A."/>
            <person name="Felber R."/>
            <person name="Schnabl S."/>
            <person name="Hiller R."/>
            <person name="Schmidt W."/>
            <person name="Lecharny A."/>
            <person name="Aubourg S."/>
            <person name="Chefdor F."/>
            <person name="Cooke R."/>
            <person name="Berger C."/>
            <person name="Monfort A."/>
            <person name="Casacuberta E."/>
            <person name="Gibbons T."/>
            <person name="Weber N."/>
            <person name="Vandenbol M."/>
            <person name="Bargues M."/>
            <person name="Terol J."/>
            <person name="Torres A."/>
            <person name="Perez-Perez A."/>
            <person name="Purnelle B."/>
            <person name="Bent E."/>
            <person name="Johnson S."/>
            <person name="Tacon D."/>
            <person name="Jesse T."/>
            <person name="Heijnen L."/>
            <person name="Schwarz S."/>
            <person name="Scholler P."/>
            <person name="Heber S."/>
            <person name="Francs P."/>
            <person name="Bielke C."/>
            <person name="Frishman D."/>
            <person name="Haase D."/>
            <person name="Lemcke K."/>
            <person name="Mewes H.-W."/>
            <person name="Stocker S."/>
            <person name="Zaccaria P."/>
            <person name="Bevan M."/>
            <person name="Wilson R.K."/>
            <person name="de la Bastide M."/>
            <person name="Habermann K."/>
            <person name="Parnell L."/>
            <person name="Dedhia N."/>
            <person name="Gnoj L."/>
            <person name="Schutz K."/>
            <person name="Huang E."/>
            <person name="Spiegel L."/>
            <person name="Sekhon M."/>
            <person name="Murray J."/>
            <person name="Sheet P."/>
            <person name="Cordes M."/>
            <person name="Abu-Threideh J."/>
            <person name="Stoneking T."/>
            <person name="Kalicki J."/>
            <person name="Graves T."/>
            <person name="Harmon G."/>
            <person name="Edwards J."/>
            <person name="Latreille P."/>
            <person name="Courtney L."/>
            <person name="Cloud J."/>
            <person name="Abbott A."/>
            <person name="Scott K."/>
            <person name="Johnson D."/>
            <person name="Minx P."/>
            <person name="Bentley D."/>
            <person name="Fulton B."/>
            <person name="Miller N."/>
            <person name="Greco T."/>
            <person name="Kemp K."/>
            <person name="Kramer J."/>
            <person name="Fulton L."/>
            <person name="Mardis E."/>
            <person name="Dante M."/>
            <person name="Pepin K."/>
            <person name="Hillier L.W."/>
            <person name="Nelson J."/>
            <person name="Spieth J."/>
            <person name="Ryan E."/>
            <person name="Andrews S."/>
            <person name="Geisel C."/>
            <person name="Layman D."/>
            <person name="Du H."/>
            <person name="Ali J."/>
            <person name="Berghoff A."/>
            <person name="Jones K."/>
            <person name="Drone K."/>
            <person name="Cotton M."/>
            <person name="Joshu C."/>
            <person name="Antonoiu B."/>
            <person name="Zidanic M."/>
            <person name="Strong C."/>
            <person name="Sun H."/>
            <person name="Lamar B."/>
            <person name="Yordan C."/>
            <person name="Ma P."/>
            <person name="Zhong J."/>
            <person name="Preston R."/>
            <person name="Vil D."/>
            <person name="Shekher M."/>
            <person name="Matero A."/>
            <person name="Shah R."/>
            <person name="Swaby I.K."/>
            <person name="O'Shaughnessy A."/>
            <person name="Rodriguez M."/>
            <person name="Hoffman J."/>
            <person name="Till S."/>
            <person name="Granat S."/>
            <person name="Shohdy N."/>
            <person name="Hasegawa A."/>
            <person name="Hameed A."/>
            <person name="Lodhi M."/>
            <person name="Johnson A."/>
            <person name="Chen E."/>
            <person name="Marra M.A."/>
            <person name="Martienssen R."/>
            <person name="McCombie W.R."/>
        </authorList>
    </citation>
    <scope>NUCLEOTIDE SEQUENCE [LARGE SCALE GENOMIC DNA]</scope>
    <source>
        <strain>cv. Columbia</strain>
    </source>
</reference>
<reference key="2">
    <citation type="journal article" date="2017" name="Plant J.">
        <title>Araport11: a complete reannotation of the Arabidopsis thaliana reference genome.</title>
        <authorList>
            <person name="Cheng C.Y."/>
            <person name="Krishnakumar V."/>
            <person name="Chan A.P."/>
            <person name="Thibaud-Nissen F."/>
            <person name="Schobel S."/>
            <person name="Town C.D."/>
        </authorList>
    </citation>
    <scope>GENOME REANNOTATION</scope>
    <source>
        <strain>cv. Columbia</strain>
    </source>
</reference>
<reference key="3">
    <citation type="journal article" date="2004" name="J. Mol. Evol.">
        <title>Phylogenetic analysis of the plant endo-beta-1,4-glucanase gene family.</title>
        <authorList>
            <person name="Libertini E."/>
            <person name="Li Y."/>
            <person name="McQueen-Mason S.J."/>
        </authorList>
    </citation>
    <scope>GENE FAMILY</scope>
</reference>
<accession>Q9SZ90</accession>
<accession>F4JKS2</accession>
<feature type="signal peptide" evidence="2">
    <location>
        <begin position="1"/>
        <end position="21"/>
    </location>
</feature>
<feature type="chain" id="PRO_0000249270" description="Endoglucanase 18">
    <location>
        <begin position="22"/>
        <end position="478"/>
    </location>
</feature>
<feature type="region of interest" description="Disordered" evidence="6">
    <location>
        <begin position="433"/>
        <end position="452"/>
    </location>
</feature>
<feature type="active site" description="Nucleophile" evidence="5">
    <location>
        <position position="76"/>
    </location>
</feature>
<feature type="active site" evidence="3">
    <location>
        <position position="398"/>
    </location>
</feature>
<feature type="active site" evidence="4">
    <location>
        <position position="449"/>
    </location>
</feature>
<feature type="active site" evidence="4">
    <location>
        <position position="458"/>
    </location>
</feature>
<feature type="glycosylation site" description="N-linked (GlcNAc...) asparagine" evidence="2">
    <location>
        <position position="29"/>
    </location>
</feature>
<feature type="glycosylation site" description="N-linked (GlcNAc...) asparagine" evidence="2">
    <location>
        <position position="442"/>
    </location>
</feature>
<gene>
    <name type="ordered locus">At4g09740</name>
    <name type="ORF">F17A8.90</name>
</gene>
<keyword id="KW-0119">Carbohydrate metabolism</keyword>
<keyword id="KW-0961">Cell wall biogenesis/degradation</keyword>
<keyword id="KW-0136">Cellulose degradation</keyword>
<keyword id="KW-0325">Glycoprotein</keyword>
<keyword id="KW-0326">Glycosidase</keyword>
<keyword id="KW-0378">Hydrolase</keyword>
<keyword id="KW-0624">Polysaccharide degradation</keyword>
<keyword id="KW-1185">Reference proteome</keyword>
<keyword id="KW-0964">Secreted</keyword>
<keyword id="KW-0732">Signal</keyword>
<comment type="catalytic activity">
    <reaction>
        <text>Endohydrolysis of (1-&gt;4)-beta-D-glucosidic linkages in cellulose, lichenin and cereal beta-D-glucans.</text>
        <dbReference type="EC" id="3.2.1.4"/>
    </reaction>
</comment>
<comment type="subcellular location">
    <subcellularLocation>
        <location evidence="1">Secreted</location>
    </subcellularLocation>
</comment>
<comment type="similarity">
    <text evidence="5 7">Belongs to the glycosyl hydrolase 9 (cellulase E) family.</text>
</comment>
<comment type="sequence caution" evidence="7">
    <conflict type="erroneous gene model prediction">
        <sequence resource="EMBL-CDS" id="CAB39641"/>
    </conflict>
</comment>
<comment type="sequence caution" evidence="7">
    <conflict type="erroneous gene model prediction">
        <sequence resource="EMBL-CDS" id="CAB78097"/>
    </conflict>
</comment>
<evidence type="ECO:0000250" key="1"/>
<evidence type="ECO:0000255" key="2"/>
<evidence type="ECO:0000255" key="3">
    <source>
        <dbReference type="PROSITE-ProRule" id="PRU10059"/>
    </source>
</evidence>
<evidence type="ECO:0000255" key="4">
    <source>
        <dbReference type="PROSITE-ProRule" id="PRU10060"/>
    </source>
</evidence>
<evidence type="ECO:0000255" key="5">
    <source>
        <dbReference type="PROSITE-ProRule" id="PRU10140"/>
    </source>
</evidence>
<evidence type="ECO:0000256" key="6">
    <source>
        <dbReference type="SAM" id="MobiDB-lite"/>
    </source>
</evidence>
<evidence type="ECO:0000305" key="7"/>
<proteinExistence type="inferred from homology"/>
<protein>
    <recommendedName>
        <fullName>Endoglucanase 18</fullName>
        <ecNumber>3.2.1.4</ecNumber>
    </recommendedName>
    <alternativeName>
        <fullName>Endo-1,4-beta glucanase 18</fullName>
    </alternativeName>
</protein>